<comment type="function">
    <text evidence="1">Catalyzes the radical-mediated insertion of two sulfur atoms into the C-6 and C-8 positions of the octanoyl moiety bound to the lipoyl domains of lipoate-dependent enzymes, thereby converting the octanoylated domains into lipoylated derivatives.</text>
</comment>
<comment type="catalytic activity">
    <reaction evidence="1">
        <text>[[Fe-S] cluster scaffold protein carrying a second [4Fe-4S](2+) cluster] + N(6)-octanoyl-L-lysyl-[protein] + 2 oxidized [2Fe-2S]-[ferredoxin] + 2 S-adenosyl-L-methionine + 4 H(+) = [[Fe-S] cluster scaffold protein] + N(6)-[(R)-dihydrolipoyl]-L-lysyl-[protein] + 4 Fe(3+) + 2 hydrogen sulfide + 2 5'-deoxyadenosine + 2 L-methionine + 2 reduced [2Fe-2S]-[ferredoxin]</text>
        <dbReference type="Rhea" id="RHEA:16585"/>
        <dbReference type="Rhea" id="RHEA-COMP:9928"/>
        <dbReference type="Rhea" id="RHEA-COMP:10000"/>
        <dbReference type="Rhea" id="RHEA-COMP:10001"/>
        <dbReference type="Rhea" id="RHEA-COMP:10475"/>
        <dbReference type="Rhea" id="RHEA-COMP:14568"/>
        <dbReference type="Rhea" id="RHEA-COMP:14569"/>
        <dbReference type="ChEBI" id="CHEBI:15378"/>
        <dbReference type="ChEBI" id="CHEBI:17319"/>
        <dbReference type="ChEBI" id="CHEBI:29034"/>
        <dbReference type="ChEBI" id="CHEBI:29919"/>
        <dbReference type="ChEBI" id="CHEBI:33722"/>
        <dbReference type="ChEBI" id="CHEBI:33737"/>
        <dbReference type="ChEBI" id="CHEBI:33738"/>
        <dbReference type="ChEBI" id="CHEBI:57844"/>
        <dbReference type="ChEBI" id="CHEBI:59789"/>
        <dbReference type="ChEBI" id="CHEBI:78809"/>
        <dbReference type="ChEBI" id="CHEBI:83100"/>
        <dbReference type="EC" id="2.8.1.8"/>
    </reaction>
</comment>
<comment type="cofactor">
    <cofactor evidence="1">
        <name>[4Fe-4S] cluster</name>
        <dbReference type="ChEBI" id="CHEBI:49883"/>
    </cofactor>
    <text evidence="1">Binds 2 [4Fe-4S] clusters per subunit. One cluster is coordinated with 3 cysteines and an exchangeable S-adenosyl-L-methionine.</text>
</comment>
<comment type="pathway">
    <text evidence="1">Protein modification; protein lipoylation via endogenous pathway; protein N(6)-(lipoyl)lysine from octanoyl-[acyl-carrier-protein].</text>
</comment>
<comment type="subcellular location">
    <subcellularLocation>
        <location evidence="1">Cytoplasm</location>
    </subcellularLocation>
</comment>
<comment type="similarity">
    <text evidence="1">Belongs to the radical SAM superfamily. Lipoyl synthase family.</text>
</comment>
<proteinExistence type="inferred from homology"/>
<dbReference type="EC" id="2.8.1.8" evidence="1"/>
<dbReference type="EMBL" id="CP001215">
    <property type="protein sequence ID" value="ACP14495.1"/>
    <property type="molecule type" value="Genomic_DNA"/>
</dbReference>
<dbReference type="RefSeq" id="WP_000166375.1">
    <property type="nucleotide sequence ID" value="NC_012581.1"/>
</dbReference>
<dbReference type="SMR" id="C3LCA6"/>
<dbReference type="GeneID" id="93006112"/>
<dbReference type="KEGG" id="bah:BAMEG_5262"/>
<dbReference type="HOGENOM" id="CLU_033144_2_1_9"/>
<dbReference type="GO" id="GO:0005737">
    <property type="term" value="C:cytoplasm"/>
    <property type="evidence" value="ECO:0007669"/>
    <property type="project" value="UniProtKB-SubCell"/>
</dbReference>
<dbReference type="GO" id="GO:0051539">
    <property type="term" value="F:4 iron, 4 sulfur cluster binding"/>
    <property type="evidence" value="ECO:0007669"/>
    <property type="project" value="UniProtKB-UniRule"/>
</dbReference>
<dbReference type="GO" id="GO:0016992">
    <property type="term" value="F:lipoate synthase activity"/>
    <property type="evidence" value="ECO:0007669"/>
    <property type="project" value="UniProtKB-UniRule"/>
</dbReference>
<dbReference type="GO" id="GO:0046872">
    <property type="term" value="F:metal ion binding"/>
    <property type="evidence" value="ECO:0007669"/>
    <property type="project" value="UniProtKB-KW"/>
</dbReference>
<dbReference type="CDD" id="cd01335">
    <property type="entry name" value="Radical_SAM"/>
    <property type="match status" value="1"/>
</dbReference>
<dbReference type="FunFam" id="3.20.20.70:FF:000040">
    <property type="entry name" value="Lipoyl synthase"/>
    <property type="match status" value="1"/>
</dbReference>
<dbReference type="Gene3D" id="3.20.20.70">
    <property type="entry name" value="Aldolase class I"/>
    <property type="match status" value="1"/>
</dbReference>
<dbReference type="HAMAP" id="MF_00206">
    <property type="entry name" value="Lipoyl_synth"/>
    <property type="match status" value="1"/>
</dbReference>
<dbReference type="InterPro" id="IPR013785">
    <property type="entry name" value="Aldolase_TIM"/>
</dbReference>
<dbReference type="InterPro" id="IPR006638">
    <property type="entry name" value="Elp3/MiaA/NifB-like_rSAM"/>
</dbReference>
<dbReference type="InterPro" id="IPR031691">
    <property type="entry name" value="LIAS_N"/>
</dbReference>
<dbReference type="InterPro" id="IPR003698">
    <property type="entry name" value="Lipoyl_synth"/>
</dbReference>
<dbReference type="InterPro" id="IPR007197">
    <property type="entry name" value="rSAM"/>
</dbReference>
<dbReference type="NCBIfam" id="TIGR00510">
    <property type="entry name" value="lipA"/>
    <property type="match status" value="1"/>
</dbReference>
<dbReference type="NCBIfam" id="NF004019">
    <property type="entry name" value="PRK05481.1"/>
    <property type="match status" value="1"/>
</dbReference>
<dbReference type="NCBIfam" id="NF009544">
    <property type="entry name" value="PRK12928.1"/>
    <property type="match status" value="1"/>
</dbReference>
<dbReference type="PANTHER" id="PTHR10949">
    <property type="entry name" value="LIPOYL SYNTHASE"/>
    <property type="match status" value="1"/>
</dbReference>
<dbReference type="PANTHER" id="PTHR10949:SF0">
    <property type="entry name" value="LIPOYL SYNTHASE, MITOCHONDRIAL"/>
    <property type="match status" value="1"/>
</dbReference>
<dbReference type="Pfam" id="PF16881">
    <property type="entry name" value="LIAS_N"/>
    <property type="match status" value="1"/>
</dbReference>
<dbReference type="Pfam" id="PF04055">
    <property type="entry name" value="Radical_SAM"/>
    <property type="match status" value="1"/>
</dbReference>
<dbReference type="PIRSF" id="PIRSF005963">
    <property type="entry name" value="Lipoyl_synth"/>
    <property type="match status" value="1"/>
</dbReference>
<dbReference type="SFLD" id="SFLDF00271">
    <property type="entry name" value="lipoyl_synthase"/>
    <property type="match status" value="1"/>
</dbReference>
<dbReference type="SFLD" id="SFLDG01058">
    <property type="entry name" value="lipoyl_synthase_like"/>
    <property type="match status" value="1"/>
</dbReference>
<dbReference type="SMART" id="SM00729">
    <property type="entry name" value="Elp3"/>
    <property type="match status" value="1"/>
</dbReference>
<dbReference type="SUPFAM" id="SSF102114">
    <property type="entry name" value="Radical SAM enzymes"/>
    <property type="match status" value="1"/>
</dbReference>
<dbReference type="PROSITE" id="PS51918">
    <property type="entry name" value="RADICAL_SAM"/>
    <property type="match status" value="1"/>
</dbReference>
<reference key="1">
    <citation type="submission" date="2008-10" db="EMBL/GenBank/DDBJ databases">
        <title>Genome sequence of Bacillus anthracis str. CDC 684.</title>
        <authorList>
            <person name="Dodson R.J."/>
            <person name="Munk A.C."/>
            <person name="Brettin T."/>
            <person name="Bruce D."/>
            <person name="Detter C."/>
            <person name="Tapia R."/>
            <person name="Han C."/>
            <person name="Sutton G."/>
            <person name="Sims D."/>
        </authorList>
    </citation>
    <scope>NUCLEOTIDE SEQUENCE [LARGE SCALE GENOMIC DNA]</scope>
    <source>
        <strain>CDC 684 / NRRL 3495</strain>
    </source>
</reference>
<feature type="chain" id="PRO_1000124619" description="Lipoyl synthase">
    <location>
        <begin position="1"/>
        <end position="298"/>
    </location>
</feature>
<feature type="domain" description="Radical SAM core" evidence="2">
    <location>
        <begin position="53"/>
        <end position="269"/>
    </location>
</feature>
<feature type="binding site" evidence="1">
    <location>
        <position position="40"/>
    </location>
    <ligand>
        <name>[4Fe-4S] cluster</name>
        <dbReference type="ChEBI" id="CHEBI:49883"/>
        <label>1</label>
    </ligand>
</feature>
<feature type="binding site" evidence="1">
    <location>
        <position position="45"/>
    </location>
    <ligand>
        <name>[4Fe-4S] cluster</name>
        <dbReference type="ChEBI" id="CHEBI:49883"/>
        <label>1</label>
    </ligand>
</feature>
<feature type="binding site" evidence="1">
    <location>
        <position position="51"/>
    </location>
    <ligand>
        <name>[4Fe-4S] cluster</name>
        <dbReference type="ChEBI" id="CHEBI:49883"/>
        <label>1</label>
    </ligand>
</feature>
<feature type="binding site" evidence="1">
    <location>
        <position position="67"/>
    </location>
    <ligand>
        <name>[4Fe-4S] cluster</name>
        <dbReference type="ChEBI" id="CHEBI:49883"/>
        <label>2</label>
        <note>4Fe-4S-S-AdoMet</note>
    </ligand>
</feature>
<feature type="binding site" evidence="1">
    <location>
        <position position="71"/>
    </location>
    <ligand>
        <name>[4Fe-4S] cluster</name>
        <dbReference type="ChEBI" id="CHEBI:49883"/>
        <label>2</label>
        <note>4Fe-4S-S-AdoMet</note>
    </ligand>
</feature>
<feature type="binding site" evidence="1">
    <location>
        <position position="74"/>
    </location>
    <ligand>
        <name>[4Fe-4S] cluster</name>
        <dbReference type="ChEBI" id="CHEBI:49883"/>
        <label>2</label>
        <note>4Fe-4S-S-AdoMet</note>
    </ligand>
</feature>
<feature type="binding site" evidence="1">
    <location>
        <position position="280"/>
    </location>
    <ligand>
        <name>[4Fe-4S] cluster</name>
        <dbReference type="ChEBI" id="CHEBI:49883"/>
        <label>1</label>
    </ligand>
</feature>
<gene>
    <name evidence="1" type="primary">lipA</name>
    <name type="ordered locus">BAMEG_5262</name>
</gene>
<accession>C3LCA6</accession>
<protein>
    <recommendedName>
        <fullName evidence="1">Lipoyl synthase</fullName>
        <ecNumber evidence="1">2.8.1.8</ecNumber>
    </recommendedName>
    <alternativeName>
        <fullName evidence="1">Lip-syn</fullName>
        <shortName evidence="1">LS</shortName>
    </alternativeName>
    <alternativeName>
        <fullName evidence="1">Lipoate synthase</fullName>
    </alternativeName>
    <alternativeName>
        <fullName evidence="1">Lipoic acid synthase</fullName>
    </alternativeName>
    <alternativeName>
        <fullName evidence="1">Sulfur insertion protein LipA</fullName>
    </alternativeName>
</protein>
<evidence type="ECO:0000255" key="1">
    <source>
        <dbReference type="HAMAP-Rule" id="MF_00206"/>
    </source>
</evidence>
<evidence type="ECO:0000255" key="2">
    <source>
        <dbReference type="PROSITE-ProRule" id="PRU01266"/>
    </source>
</evidence>
<organism>
    <name type="scientific">Bacillus anthracis (strain CDC 684 / NRRL 3495)</name>
    <dbReference type="NCBI Taxonomy" id="568206"/>
    <lineage>
        <taxon>Bacteria</taxon>
        <taxon>Bacillati</taxon>
        <taxon>Bacillota</taxon>
        <taxon>Bacilli</taxon>
        <taxon>Bacillales</taxon>
        <taxon>Bacillaceae</taxon>
        <taxon>Bacillus</taxon>
        <taxon>Bacillus cereus group</taxon>
    </lineage>
</organism>
<name>LIPA_BACAC</name>
<keyword id="KW-0004">4Fe-4S</keyword>
<keyword id="KW-0963">Cytoplasm</keyword>
<keyword id="KW-0408">Iron</keyword>
<keyword id="KW-0411">Iron-sulfur</keyword>
<keyword id="KW-0479">Metal-binding</keyword>
<keyword id="KW-0949">S-adenosyl-L-methionine</keyword>
<keyword id="KW-0808">Transferase</keyword>
<sequence length="298" mass="33701">MTKQTEYKRKPEWLKIKLNTNENYTGLKKMMRSKNLHTVCEEAKCPNIHECWAVRKTATFMILGAVCTRACRFCAVKTGLPTELDLQEPERVADSVVQMGLKHVVITAVARDDLKDGGAAVFAETVRAVRRKNPFTSIEVLPSDMGGVEENLKMLMDAKPDILNHNIETVRRLSNRVRARAKYDRSLEFLRRAKEMQPDIPTKSSIMVGLGETREDLIEAMDDLRANNVDILTLGQYLQPSKKHLPVLKYYPPAEFAELKEIALSKGFSHCEAGPLVRSSYHADEQVRSAKEKTAEAK</sequence>